<keyword id="KW-0285">Flavoprotein</keyword>
<keyword id="KW-0288">FMN</keyword>
<keyword id="KW-0560">Oxidoreductase</keyword>
<keyword id="KW-0664">Pyridoxine biosynthesis</keyword>
<reference key="1">
    <citation type="journal article" date="2004" name="Nat. Genet.">
        <title>Evidence in the Legionella pneumophila genome for exploitation of host cell functions and high genome plasticity.</title>
        <authorList>
            <person name="Cazalet C."/>
            <person name="Rusniok C."/>
            <person name="Brueggemann H."/>
            <person name="Zidane N."/>
            <person name="Magnier A."/>
            <person name="Ma L."/>
            <person name="Tichit M."/>
            <person name="Jarraud S."/>
            <person name="Bouchier C."/>
            <person name="Vandenesch F."/>
            <person name="Kunst F."/>
            <person name="Etienne J."/>
            <person name="Glaser P."/>
            <person name="Buchrieser C."/>
        </authorList>
    </citation>
    <scope>NUCLEOTIDE SEQUENCE [LARGE SCALE GENOMIC DNA]</scope>
    <source>
        <strain>Paris</strain>
    </source>
</reference>
<dbReference type="EC" id="1.4.3.5" evidence="1"/>
<dbReference type="EMBL" id="CR628336">
    <property type="protein sequence ID" value="CAH11749.1"/>
    <property type="molecule type" value="Genomic_DNA"/>
</dbReference>
<dbReference type="RefSeq" id="WP_010946283.1">
    <property type="nucleotide sequence ID" value="NC_006368.1"/>
</dbReference>
<dbReference type="SMR" id="Q5X7K4"/>
<dbReference type="GeneID" id="57034537"/>
<dbReference type="KEGG" id="lpp:lpp0601"/>
<dbReference type="LegioList" id="lpp0601"/>
<dbReference type="HOGENOM" id="CLU_032263_2_2_6"/>
<dbReference type="UniPathway" id="UPA01068">
    <property type="reaction ID" value="UER00304"/>
</dbReference>
<dbReference type="UniPathway" id="UPA01068">
    <property type="reaction ID" value="UER00305"/>
</dbReference>
<dbReference type="GO" id="GO:0010181">
    <property type="term" value="F:FMN binding"/>
    <property type="evidence" value="ECO:0007669"/>
    <property type="project" value="UniProtKB-UniRule"/>
</dbReference>
<dbReference type="GO" id="GO:0004733">
    <property type="term" value="F:pyridoxamine phosphate oxidase activity"/>
    <property type="evidence" value="ECO:0007669"/>
    <property type="project" value="UniProtKB-UniRule"/>
</dbReference>
<dbReference type="GO" id="GO:0008615">
    <property type="term" value="P:pyridoxine biosynthetic process"/>
    <property type="evidence" value="ECO:0007669"/>
    <property type="project" value="UniProtKB-KW"/>
</dbReference>
<dbReference type="Gene3D" id="2.30.110.10">
    <property type="entry name" value="Electron Transport, Fmn-binding Protein, Chain A"/>
    <property type="match status" value="1"/>
</dbReference>
<dbReference type="HAMAP" id="MF_01629">
    <property type="entry name" value="PdxH"/>
    <property type="match status" value="1"/>
</dbReference>
<dbReference type="InterPro" id="IPR000659">
    <property type="entry name" value="Pyridox_Oxase"/>
</dbReference>
<dbReference type="InterPro" id="IPR019740">
    <property type="entry name" value="Pyridox_Oxase_CS"/>
</dbReference>
<dbReference type="InterPro" id="IPR011576">
    <property type="entry name" value="Pyridox_Oxase_N"/>
</dbReference>
<dbReference type="InterPro" id="IPR019576">
    <property type="entry name" value="Pyridoxamine_oxidase_dimer_C"/>
</dbReference>
<dbReference type="InterPro" id="IPR012349">
    <property type="entry name" value="Split_barrel_FMN-bd"/>
</dbReference>
<dbReference type="NCBIfam" id="TIGR00558">
    <property type="entry name" value="pdxH"/>
    <property type="match status" value="1"/>
</dbReference>
<dbReference type="NCBIfam" id="NF004231">
    <property type="entry name" value="PRK05679.1"/>
    <property type="match status" value="1"/>
</dbReference>
<dbReference type="PANTHER" id="PTHR10851:SF0">
    <property type="entry name" value="PYRIDOXINE-5'-PHOSPHATE OXIDASE"/>
    <property type="match status" value="1"/>
</dbReference>
<dbReference type="PANTHER" id="PTHR10851">
    <property type="entry name" value="PYRIDOXINE-5-PHOSPHATE OXIDASE"/>
    <property type="match status" value="1"/>
</dbReference>
<dbReference type="Pfam" id="PF10590">
    <property type="entry name" value="PNP_phzG_C"/>
    <property type="match status" value="1"/>
</dbReference>
<dbReference type="Pfam" id="PF01243">
    <property type="entry name" value="PNPOx_N"/>
    <property type="match status" value="1"/>
</dbReference>
<dbReference type="PIRSF" id="PIRSF000190">
    <property type="entry name" value="Pyd_amn-ph_oxd"/>
    <property type="match status" value="1"/>
</dbReference>
<dbReference type="SUPFAM" id="SSF50475">
    <property type="entry name" value="FMN-binding split barrel"/>
    <property type="match status" value="1"/>
</dbReference>
<dbReference type="PROSITE" id="PS01064">
    <property type="entry name" value="PYRIDOX_OXIDASE"/>
    <property type="match status" value="1"/>
</dbReference>
<evidence type="ECO:0000255" key="1">
    <source>
        <dbReference type="HAMAP-Rule" id="MF_01629"/>
    </source>
</evidence>
<name>PDXH_LEGPA</name>
<feature type="chain" id="PRO_0000167715" description="Pyridoxine/pyridoxamine 5'-phosphate oxidase">
    <location>
        <begin position="1"/>
        <end position="215"/>
    </location>
</feature>
<feature type="binding site" evidence="1">
    <location>
        <begin position="11"/>
        <end position="14"/>
    </location>
    <ligand>
        <name>substrate</name>
    </ligand>
</feature>
<feature type="binding site" evidence="1">
    <location>
        <begin position="64"/>
        <end position="69"/>
    </location>
    <ligand>
        <name>FMN</name>
        <dbReference type="ChEBI" id="CHEBI:58210"/>
    </ligand>
</feature>
<feature type="binding site" evidence="1">
    <location>
        <position position="69"/>
    </location>
    <ligand>
        <name>substrate</name>
    </ligand>
</feature>
<feature type="binding site" evidence="1">
    <location>
        <begin position="79"/>
        <end position="80"/>
    </location>
    <ligand>
        <name>FMN</name>
        <dbReference type="ChEBI" id="CHEBI:58210"/>
    </ligand>
</feature>
<feature type="binding site" evidence="1">
    <location>
        <position position="86"/>
    </location>
    <ligand>
        <name>FMN</name>
        <dbReference type="ChEBI" id="CHEBI:58210"/>
    </ligand>
</feature>
<feature type="binding site" evidence="1">
    <location>
        <position position="108"/>
    </location>
    <ligand>
        <name>FMN</name>
        <dbReference type="ChEBI" id="CHEBI:58210"/>
    </ligand>
</feature>
<feature type="binding site" evidence="1">
    <location>
        <position position="126"/>
    </location>
    <ligand>
        <name>substrate</name>
    </ligand>
</feature>
<feature type="binding site" evidence="1">
    <location>
        <position position="130"/>
    </location>
    <ligand>
        <name>substrate</name>
    </ligand>
</feature>
<feature type="binding site" evidence="1">
    <location>
        <position position="134"/>
    </location>
    <ligand>
        <name>substrate</name>
    </ligand>
</feature>
<feature type="binding site" evidence="1">
    <location>
        <begin position="143"/>
        <end position="144"/>
    </location>
    <ligand>
        <name>FMN</name>
        <dbReference type="ChEBI" id="CHEBI:58210"/>
    </ligand>
</feature>
<feature type="binding site" evidence="1">
    <location>
        <position position="188"/>
    </location>
    <ligand>
        <name>FMN</name>
        <dbReference type="ChEBI" id="CHEBI:58210"/>
    </ligand>
</feature>
<feature type="binding site" evidence="1">
    <location>
        <begin position="194"/>
        <end position="196"/>
    </location>
    <ligand>
        <name>substrate</name>
    </ligand>
</feature>
<feature type="binding site" evidence="1">
    <location>
        <position position="198"/>
    </location>
    <ligand>
        <name>FMN</name>
        <dbReference type="ChEBI" id="CHEBI:58210"/>
    </ligand>
</feature>
<organism>
    <name type="scientific">Legionella pneumophila (strain Paris)</name>
    <dbReference type="NCBI Taxonomy" id="297246"/>
    <lineage>
        <taxon>Bacteria</taxon>
        <taxon>Pseudomonadati</taxon>
        <taxon>Pseudomonadota</taxon>
        <taxon>Gammaproteobacteria</taxon>
        <taxon>Legionellales</taxon>
        <taxon>Legionellaceae</taxon>
        <taxon>Legionella</taxon>
    </lineage>
</organism>
<comment type="function">
    <text evidence="1">Catalyzes the oxidation of either pyridoxine 5'-phosphate (PNP) or pyridoxamine 5'-phosphate (PMP) into pyridoxal 5'-phosphate (PLP).</text>
</comment>
<comment type="catalytic activity">
    <reaction evidence="1">
        <text>pyridoxamine 5'-phosphate + O2 + H2O = pyridoxal 5'-phosphate + H2O2 + NH4(+)</text>
        <dbReference type="Rhea" id="RHEA:15817"/>
        <dbReference type="ChEBI" id="CHEBI:15377"/>
        <dbReference type="ChEBI" id="CHEBI:15379"/>
        <dbReference type="ChEBI" id="CHEBI:16240"/>
        <dbReference type="ChEBI" id="CHEBI:28938"/>
        <dbReference type="ChEBI" id="CHEBI:58451"/>
        <dbReference type="ChEBI" id="CHEBI:597326"/>
        <dbReference type="EC" id="1.4.3.5"/>
    </reaction>
</comment>
<comment type="catalytic activity">
    <reaction evidence="1">
        <text>pyridoxine 5'-phosphate + O2 = pyridoxal 5'-phosphate + H2O2</text>
        <dbReference type="Rhea" id="RHEA:15149"/>
        <dbReference type="ChEBI" id="CHEBI:15379"/>
        <dbReference type="ChEBI" id="CHEBI:16240"/>
        <dbReference type="ChEBI" id="CHEBI:58589"/>
        <dbReference type="ChEBI" id="CHEBI:597326"/>
        <dbReference type="EC" id="1.4.3.5"/>
    </reaction>
</comment>
<comment type="cofactor">
    <cofactor evidence="1">
        <name>FMN</name>
        <dbReference type="ChEBI" id="CHEBI:58210"/>
    </cofactor>
    <text evidence="1">Binds 1 FMN per subunit.</text>
</comment>
<comment type="pathway">
    <text evidence="1">Cofactor metabolism; pyridoxal 5'-phosphate salvage; pyridoxal 5'-phosphate from pyridoxamine 5'-phosphate: step 1/1.</text>
</comment>
<comment type="pathway">
    <text evidence="1">Cofactor metabolism; pyridoxal 5'-phosphate salvage; pyridoxal 5'-phosphate from pyridoxine 5'-phosphate: step 1/1.</text>
</comment>
<comment type="subunit">
    <text evidence="1">Homodimer.</text>
</comment>
<comment type="similarity">
    <text evidence="1">Belongs to the pyridoxamine 5'-phosphate oxidase family.</text>
</comment>
<proteinExistence type="inferred from homology"/>
<protein>
    <recommendedName>
        <fullName evidence="1">Pyridoxine/pyridoxamine 5'-phosphate oxidase</fullName>
        <ecNumber evidence="1">1.4.3.5</ecNumber>
    </recommendedName>
    <alternativeName>
        <fullName evidence="1">PNP/PMP oxidase</fullName>
        <shortName evidence="1">PNPOx</shortName>
    </alternativeName>
    <alternativeName>
        <fullName evidence="1">Pyridoxal 5'-phosphate synthase</fullName>
    </alternativeName>
</protein>
<accession>Q5X7K4</accession>
<sequence>MSKFRSLADIRRDYGELQLSEESAENDPISQFKLWFDDVLLNEKNDPTAMVLSTVDEKGYPDSRVVLLKGLENGNFIFYTNYQSAKAMQIQKNPYAALNFYWPQMARQVRVRGRVKKISSEQSDAYFSSRPLKSQFSAIVSPQSQEILDRISLEDALNQLIEEYGQKPVVRPENWGGYMIIPDEIEFWQGRDNRLHDRIHYYRHGHEWTHRRLAP</sequence>
<gene>
    <name evidence="1" type="primary">pdxH</name>
    <name type="ordered locus">lpp0601</name>
</gene>